<keyword id="KW-0687">Ribonucleoprotein</keyword>
<keyword id="KW-0689">Ribosomal protein</keyword>
<protein>
    <recommendedName>
        <fullName evidence="1">Small ribosomal subunit protein uS9</fullName>
    </recommendedName>
    <alternativeName>
        <fullName evidence="2">30S ribosomal protein S9</fullName>
    </alternativeName>
</protein>
<accession>B8D6F5</accession>
<proteinExistence type="inferred from homology"/>
<dbReference type="EMBL" id="CP001140">
    <property type="protein sequence ID" value="ACL11686.1"/>
    <property type="molecule type" value="Genomic_DNA"/>
</dbReference>
<dbReference type="RefSeq" id="WP_012609027.1">
    <property type="nucleotide sequence ID" value="NC_011766.1"/>
</dbReference>
<dbReference type="SMR" id="B8D6F5"/>
<dbReference type="STRING" id="490899.DKAM_1360"/>
<dbReference type="GeneID" id="7171404"/>
<dbReference type="KEGG" id="dka:DKAM_1360"/>
<dbReference type="eggNOG" id="arCOG04243">
    <property type="taxonomic scope" value="Archaea"/>
</dbReference>
<dbReference type="HOGENOM" id="CLU_046483_4_0_2"/>
<dbReference type="Proteomes" id="UP000006903">
    <property type="component" value="Chromosome"/>
</dbReference>
<dbReference type="GO" id="GO:0022627">
    <property type="term" value="C:cytosolic small ribosomal subunit"/>
    <property type="evidence" value="ECO:0007669"/>
    <property type="project" value="TreeGrafter"/>
</dbReference>
<dbReference type="GO" id="GO:0003723">
    <property type="term" value="F:RNA binding"/>
    <property type="evidence" value="ECO:0007669"/>
    <property type="project" value="TreeGrafter"/>
</dbReference>
<dbReference type="GO" id="GO:0003735">
    <property type="term" value="F:structural constituent of ribosome"/>
    <property type="evidence" value="ECO:0007669"/>
    <property type="project" value="InterPro"/>
</dbReference>
<dbReference type="GO" id="GO:0000462">
    <property type="term" value="P:maturation of SSU-rRNA from tricistronic rRNA transcript (SSU-rRNA, 5.8S rRNA, LSU-rRNA)"/>
    <property type="evidence" value="ECO:0007669"/>
    <property type="project" value="TreeGrafter"/>
</dbReference>
<dbReference type="GO" id="GO:0006412">
    <property type="term" value="P:translation"/>
    <property type="evidence" value="ECO:0007669"/>
    <property type="project" value="UniProtKB-UniRule"/>
</dbReference>
<dbReference type="FunFam" id="3.30.230.10:FF:000051">
    <property type="entry name" value="30S ribosomal protein S9"/>
    <property type="match status" value="1"/>
</dbReference>
<dbReference type="Gene3D" id="3.30.230.10">
    <property type="match status" value="1"/>
</dbReference>
<dbReference type="HAMAP" id="MF_00532_A">
    <property type="entry name" value="Ribosomal_uS9_A"/>
    <property type="match status" value="1"/>
</dbReference>
<dbReference type="InterPro" id="IPR020568">
    <property type="entry name" value="Ribosomal_Su5_D2-typ_SF"/>
</dbReference>
<dbReference type="InterPro" id="IPR000754">
    <property type="entry name" value="Ribosomal_uS9"/>
</dbReference>
<dbReference type="InterPro" id="IPR019958">
    <property type="entry name" value="Ribosomal_uS9_archaeal"/>
</dbReference>
<dbReference type="InterPro" id="IPR020574">
    <property type="entry name" value="Ribosomal_uS9_CS"/>
</dbReference>
<dbReference type="InterPro" id="IPR014721">
    <property type="entry name" value="Ribsml_uS5_D2-typ_fold_subgr"/>
</dbReference>
<dbReference type="NCBIfam" id="NF001749">
    <property type="entry name" value="PRK00474.1"/>
    <property type="match status" value="1"/>
</dbReference>
<dbReference type="NCBIfam" id="TIGR03627">
    <property type="entry name" value="uS9_arch"/>
    <property type="match status" value="1"/>
</dbReference>
<dbReference type="PANTHER" id="PTHR21569:SF16">
    <property type="entry name" value="RIBOSOMAL PROTEIN S16"/>
    <property type="match status" value="1"/>
</dbReference>
<dbReference type="PANTHER" id="PTHR21569">
    <property type="entry name" value="RIBOSOMAL PROTEIN S9"/>
    <property type="match status" value="1"/>
</dbReference>
<dbReference type="Pfam" id="PF00380">
    <property type="entry name" value="Ribosomal_S9"/>
    <property type="match status" value="1"/>
</dbReference>
<dbReference type="SUPFAM" id="SSF54211">
    <property type="entry name" value="Ribosomal protein S5 domain 2-like"/>
    <property type="match status" value="1"/>
</dbReference>
<dbReference type="PROSITE" id="PS00360">
    <property type="entry name" value="RIBOSOMAL_S9"/>
    <property type="match status" value="1"/>
</dbReference>
<evidence type="ECO:0000255" key="1">
    <source>
        <dbReference type="HAMAP-Rule" id="MF_00532"/>
    </source>
</evidence>
<evidence type="ECO:0000305" key="2"/>
<feature type="chain" id="PRO_1000146450" description="Small ribosomal subunit protein uS9">
    <location>
        <begin position="1"/>
        <end position="140"/>
    </location>
</feature>
<reference key="1">
    <citation type="journal article" date="2009" name="J. Bacteriol.">
        <title>Complete genome sequence of the anaerobic, protein-degrading hyperthermophilic crenarchaeon Desulfurococcus kamchatkensis.</title>
        <authorList>
            <person name="Ravin N.V."/>
            <person name="Mardanov A.V."/>
            <person name="Beletsky A.V."/>
            <person name="Kublanov I.V."/>
            <person name="Kolganova T.V."/>
            <person name="Lebedinsky A.V."/>
            <person name="Chernyh N.A."/>
            <person name="Bonch-Osmolovskaya E.A."/>
            <person name="Skryabin K.G."/>
        </authorList>
    </citation>
    <scope>NUCLEOTIDE SEQUENCE [LARGE SCALE GENOMIC DNA]</scope>
    <source>
        <strain>DSM 18924 / JCM 16383 / VKM B-2413 / 1221n</strain>
    </source>
</reference>
<sequence>MSQTLSDKIKIVVSSGKRKTSIARAVIKPGIGRVWINNVPVEFIQFELAKMKILEPLLLIGDLAKTVDIRVNVHGGGYMSQAEAVRIAIARGLVEFFNSDEVKSLFKEYDRHMLSGDPRQTEPKKWGRYSARRRWQKSYR</sequence>
<gene>
    <name evidence="1" type="primary">rps9</name>
    <name type="ordered locus">DKAM_1360</name>
</gene>
<comment type="similarity">
    <text evidence="1">Belongs to the universal ribosomal protein uS9 family.</text>
</comment>
<name>RS9_DESA1</name>
<organism>
    <name type="scientific">Desulfurococcus amylolyticus (strain DSM 18924 / JCM 16383 / VKM B-2413 / 1221n)</name>
    <name type="common">Desulfurococcus kamchatkensis</name>
    <dbReference type="NCBI Taxonomy" id="490899"/>
    <lineage>
        <taxon>Archaea</taxon>
        <taxon>Thermoproteota</taxon>
        <taxon>Thermoprotei</taxon>
        <taxon>Desulfurococcales</taxon>
        <taxon>Desulfurococcaceae</taxon>
        <taxon>Desulfurococcus</taxon>
    </lineage>
</organism>